<dbReference type="EC" id="2.1.1.178" evidence="1"/>
<dbReference type="EMBL" id="CU928162">
    <property type="protein sequence ID" value="CAR08231.2"/>
    <property type="molecule type" value="Genomic_DNA"/>
</dbReference>
<dbReference type="RefSeq" id="WP_012601553.1">
    <property type="nucleotide sequence ID" value="NC_011745.1"/>
</dbReference>
<dbReference type="SMR" id="B7MVW5"/>
<dbReference type="KEGG" id="ecq:ECED1_2039"/>
<dbReference type="HOGENOM" id="CLU_005316_6_2_6"/>
<dbReference type="Proteomes" id="UP000000748">
    <property type="component" value="Chromosome"/>
</dbReference>
<dbReference type="GO" id="GO:0005737">
    <property type="term" value="C:cytoplasm"/>
    <property type="evidence" value="ECO:0007669"/>
    <property type="project" value="UniProtKB-SubCell"/>
</dbReference>
<dbReference type="GO" id="GO:0003723">
    <property type="term" value="F:RNA binding"/>
    <property type="evidence" value="ECO:0007669"/>
    <property type="project" value="UniProtKB-KW"/>
</dbReference>
<dbReference type="GO" id="GO:0009383">
    <property type="term" value="F:rRNA (cytosine-C5-)-methyltransferase activity"/>
    <property type="evidence" value="ECO:0007669"/>
    <property type="project" value="TreeGrafter"/>
</dbReference>
<dbReference type="GO" id="GO:0070475">
    <property type="term" value="P:rRNA base methylation"/>
    <property type="evidence" value="ECO:0007669"/>
    <property type="project" value="TreeGrafter"/>
</dbReference>
<dbReference type="CDD" id="cd02440">
    <property type="entry name" value="AdoMet_MTases"/>
    <property type="match status" value="1"/>
</dbReference>
<dbReference type="FunFam" id="3.10.450.720:FF:000001">
    <property type="entry name" value="Ribosomal RNA small subunit methyltransferase F"/>
    <property type="match status" value="1"/>
</dbReference>
<dbReference type="FunFam" id="3.40.50.150:FF:000079">
    <property type="entry name" value="Ribosomal RNA small subunit methyltransferase F"/>
    <property type="match status" value="1"/>
</dbReference>
<dbReference type="Gene3D" id="3.10.450.720">
    <property type="match status" value="1"/>
</dbReference>
<dbReference type="Gene3D" id="3.40.50.150">
    <property type="entry name" value="Vaccinia Virus protein VP39"/>
    <property type="match status" value="1"/>
</dbReference>
<dbReference type="HAMAP" id="MF_01579">
    <property type="entry name" value="16SrRNA_methyltr_F"/>
    <property type="match status" value="1"/>
</dbReference>
<dbReference type="InterPro" id="IPR031341">
    <property type="entry name" value="Methyltr_RsmF_N"/>
</dbReference>
<dbReference type="InterPro" id="IPR049560">
    <property type="entry name" value="MeTrfase_RsmB-F_NOP2_cat"/>
</dbReference>
<dbReference type="InterPro" id="IPR001678">
    <property type="entry name" value="MeTrfase_RsmB-F_NOP2_dom"/>
</dbReference>
<dbReference type="InterPro" id="IPR027391">
    <property type="entry name" value="Nol1_Nop2_Fmu_2"/>
</dbReference>
<dbReference type="InterPro" id="IPR011023">
    <property type="entry name" value="Nop2p"/>
</dbReference>
<dbReference type="InterPro" id="IPR023267">
    <property type="entry name" value="RCMT"/>
</dbReference>
<dbReference type="InterPro" id="IPR023545">
    <property type="entry name" value="rRNA_ssu_MeTfrase_F"/>
</dbReference>
<dbReference type="InterPro" id="IPR018314">
    <property type="entry name" value="RsmB/NOL1/NOP2-like_CS"/>
</dbReference>
<dbReference type="InterPro" id="IPR029063">
    <property type="entry name" value="SAM-dependent_MTases_sf"/>
</dbReference>
<dbReference type="InterPro" id="IPR048457">
    <property type="entry name" value="YebU_pre-PUA_dom"/>
</dbReference>
<dbReference type="NCBIfam" id="TIGR00446">
    <property type="entry name" value="nop2p"/>
    <property type="match status" value="1"/>
</dbReference>
<dbReference type="NCBIfam" id="NF008898">
    <property type="entry name" value="PRK11933.1"/>
    <property type="match status" value="1"/>
</dbReference>
<dbReference type="PANTHER" id="PTHR22807:SF30">
    <property type="entry name" value="28S RRNA (CYTOSINE(4447)-C(5))-METHYLTRANSFERASE-RELATED"/>
    <property type="match status" value="1"/>
</dbReference>
<dbReference type="PANTHER" id="PTHR22807">
    <property type="entry name" value="NOP2 YEAST -RELATED NOL1/NOP2/FMU SUN DOMAIN-CONTAINING"/>
    <property type="match status" value="1"/>
</dbReference>
<dbReference type="Pfam" id="PF01189">
    <property type="entry name" value="Methyltr_RsmB-F"/>
    <property type="match status" value="1"/>
</dbReference>
<dbReference type="Pfam" id="PF17125">
    <property type="entry name" value="Methyltr_RsmF_N"/>
    <property type="match status" value="1"/>
</dbReference>
<dbReference type="Pfam" id="PF13636">
    <property type="entry name" value="Methyltranf_PUA"/>
    <property type="match status" value="1"/>
</dbReference>
<dbReference type="Pfam" id="PF21150">
    <property type="entry name" value="YebU_pre-PUA_dom"/>
    <property type="match status" value="1"/>
</dbReference>
<dbReference type="PRINTS" id="PR02008">
    <property type="entry name" value="RCMTFAMILY"/>
</dbReference>
<dbReference type="SUPFAM" id="SSF53335">
    <property type="entry name" value="S-adenosyl-L-methionine-dependent methyltransferases"/>
    <property type="match status" value="1"/>
</dbReference>
<dbReference type="PROSITE" id="PS01153">
    <property type="entry name" value="NOL1_NOP2_SUN"/>
    <property type="match status" value="1"/>
</dbReference>
<dbReference type="PROSITE" id="PS51686">
    <property type="entry name" value="SAM_MT_RSMB_NOP"/>
    <property type="match status" value="1"/>
</dbReference>
<feature type="chain" id="PRO_1000185642" description="Ribosomal RNA small subunit methyltransferase F">
    <location>
        <begin position="1"/>
        <end position="479"/>
    </location>
</feature>
<feature type="active site" description="Nucleophile" evidence="1">
    <location>
        <position position="247"/>
    </location>
</feature>
<feature type="binding site" evidence="1">
    <location>
        <begin position="125"/>
        <end position="131"/>
    </location>
    <ligand>
        <name>S-adenosyl-L-methionine</name>
        <dbReference type="ChEBI" id="CHEBI:59789"/>
    </ligand>
</feature>
<feature type="binding site" evidence="1">
    <location>
        <position position="149"/>
    </location>
    <ligand>
        <name>S-adenosyl-L-methionine</name>
        <dbReference type="ChEBI" id="CHEBI:59789"/>
    </ligand>
</feature>
<feature type="binding site" evidence="1">
    <location>
        <position position="176"/>
    </location>
    <ligand>
        <name>S-adenosyl-L-methionine</name>
        <dbReference type="ChEBI" id="CHEBI:59789"/>
    </ligand>
</feature>
<feature type="binding site" evidence="1">
    <location>
        <position position="194"/>
    </location>
    <ligand>
        <name>S-adenosyl-L-methionine</name>
        <dbReference type="ChEBI" id="CHEBI:59789"/>
    </ligand>
</feature>
<sequence>MAQHTVYFPDAFLTQMREAMPSTLSFDDFLAACQRPLRRSIRVNTLKTSVADFLQLTAPYGWTLTPIPWCEEGFWIERDNEDALPLGSTAEHLSGLFYIQEASSMLPVAALFADGNAPQRVMDVAAAPGSKTTQIAARMNNEGAILANEFSASRVKVLHANISRCGISNVALTHFDGRVFGAAVPEMFDAILLDAPCSGEGVVRKDPDALKNWSPESNQEIAATQRELIDSAFHALRPGGTLVYSTCTLNREENEAVCLWLKETYPDAVEFLPLGDLFPGANKALTEEGFLHVFPQIYDCEGFFVARLRKTQAIPALPTPKYKVGNFPFSPVKDREAGQIRQAAASVGLNWDENLRLWQRDKELWLFPVGIEALIGKVRFSRLGIKLAETHNKGYRWQHEAVIALASPDNVNAFELTPQEAEEWYRGRDVYPQAAPVADDVLVTFQHQPIGLAKRIGSRLKNSYPRELVRDGKLFTGNA</sequence>
<accession>B7MVW5</accession>
<gene>
    <name evidence="1" type="primary">rsmF</name>
    <name type="ordered locus">ECED1_2039</name>
</gene>
<evidence type="ECO:0000255" key="1">
    <source>
        <dbReference type="HAMAP-Rule" id="MF_01579"/>
    </source>
</evidence>
<name>RSMF_ECO81</name>
<comment type="function">
    <text evidence="1">Specifically methylates the cytosine at position 1407 (m5C1407) of 16S rRNA.</text>
</comment>
<comment type="catalytic activity">
    <reaction evidence="1">
        <text>cytidine(1407) in 16S rRNA + S-adenosyl-L-methionine = 5-methylcytidine(1407) in 16S rRNA + S-adenosyl-L-homocysteine + H(+)</text>
        <dbReference type="Rhea" id="RHEA:42756"/>
        <dbReference type="Rhea" id="RHEA-COMP:10223"/>
        <dbReference type="Rhea" id="RHEA-COMP:10224"/>
        <dbReference type="ChEBI" id="CHEBI:15378"/>
        <dbReference type="ChEBI" id="CHEBI:57856"/>
        <dbReference type="ChEBI" id="CHEBI:59789"/>
        <dbReference type="ChEBI" id="CHEBI:74483"/>
        <dbReference type="ChEBI" id="CHEBI:82748"/>
        <dbReference type="EC" id="2.1.1.178"/>
    </reaction>
</comment>
<comment type="subcellular location">
    <subcellularLocation>
        <location evidence="1">Cytoplasm</location>
    </subcellularLocation>
</comment>
<comment type="similarity">
    <text evidence="1">Belongs to the class I-like SAM-binding methyltransferase superfamily. RsmB/NOP family.</text>
</comment>
<keyword id="KW-0963">Cytoplasm</keyword>
<keyword id="KW-0489">Methyltransferase</keyword>
<keyword id="KW-0694">RNA-binding</keyword>
<keyword id="KW-0698">rRNA processing</keyword>
<keyword id="KW-0949">S-adenosyl-L-methionine</keyword>
<keyword id="KW-0808">Transferase</keyword>
<proteinExistence type="inferred from homology"/>
<organism>
    <name type="scientific">Escherichia coli O81 (strain ED1a)</name>
    <dbReference type="NCBI Taxonomy" id="585397"/>
    <lineage>
        <taxon>Bacteria</taxon>
        <taxon>Pseudomonadati</taxon>
        <taxon>Pseudomonadota</taxon>
        <taxon>Gammaproteobacteria</taxon>
        <taxon>Enterobacterales</taxon>
        <taxon>Enterobacteriaceae</taxon>
        <taxon>Escherichia</taxon>
    </lineage>
</organism>
<protein>
    <recommendedName>
        <fullName evidence="1">Ribosomal RNA small subunit methyltransferase F</fullName>
        <ecNumber evidence="1">2.1.1.178</ecNumber>
    </recommendedName>
    <alternativeName>
        <fullName evidence="1">16S rRNA m5C1407 methyltransferase</fullName>
    </alternativeName>
    <alternativeName>
        <fullName evidence="1">rRNA (cytosine-C(5)-)-methyltransferase RsmF</fullName>
    </alternativeName>
</protein>
<reference key="1">
    <citation type="journal article" date="2009" name="PLoS Genet.">
        <title>Organised genome dynamics in the Escherichia coli species results in highly diverse adaptive paths.</title>
        <authorList>
            <person name="Touchon M."/>
            <person name="Hoede C."/>
            <person name="Tenaillon O."/>
            <person name="Barbe V."/>
            <person name="Baeriswyl S."/>
            <person name="Bidet P."/>
            <person name="Bingen E."/>
            <person name="Bonacorsi S."/>
            <person name="Bouchier C."/>
            <person name="Bouvet O."/>
            <person name="Calteau A."/>
            <person name="Chiapello H."/>
            <person name="Clermont O."/>
            <person name="Cruveiller S."/>
            <person name="Danchin A."/>
            <person name="Diard M."/>
            <person name="Dossat C."/>
            <person name="Karoui M.E."/>
            <person name="Frapy E."/>
            <person name="Garry L."/>
            <person name="Ghigo J.M."/>
            <person name="Gilles A.M."/>
            <person name="Johnson J."/>
            <person name="Le Bouguenec C."/>
            <person name="Lescat M."/>
            <person name="Mangenot S."/>
            <person name="Martinez-Jehanne V."/>
            <person name="Matic I."/>
            <person name="Nassif X."/>
            <person name="Oztas S."/>
            <person name="Petit M.A."/>
            <person name="Pichon C."/>
            <person name="Rouy Z."/>
            <person name="Ruf C.S."/>
            <person name="Schneider D."/>
            <person name="Tourret J."/>
            <person name="Vacherie B."/>
            <person name="Vallenet D."/>
            <person name="Medigue C."/>
            <person name="Rocha E.P.C."/>
            <person name="Denamur E."/>
        </authorList>
    </citation>
    <scope>NUCLEOTIDE SEQUENCE [LARGE SCALE GENOMIC DNA]</scope>
    <source>
        <strain>ED1a</strain>
    </source>
</reference>